<keyword id="KW-0240">DNA-directed RNA polymerase</keyword>
<keyword id="KW-0548">Nucleotidyltransferase</keyword>
<keyword id="KW-0804">Transcription</keyword>
<keyword id="KW-0808">Transferase</keyword>
<feature type="chain" id="PRO_1000205521" description="DNA-directed RNA polymerase subunit omega">
    <location>
        <begin position="1"/>
        <end position="90"/>
    </location>
</feature>
<sequence length="90" mass="10226">MARVTVQAAVEKVGNRFKLILVAVHRARLLQSGRENSLVPEENDKVTVIALREIEQGLITESILKENNQHEDQIQKKVQMKTISSTQDFD</sequence>
<dbReference type="EC" id="2.7.7.6" evidence="1"/>
<dbReference type="EMBL" id="CP001277">
    <property type="protein sequence ID" value="ACQ67366.1"/>
    <property type="molecule type" value="Genomic_DNA"/>
</dbReference>
<dbReference type="RefSeq" id="WP_015873187.1">
    <property type="nucleotide sequence ID" value="NC_012751.1"/>
</dbReference>
<dbReference type="SMR" id="C4K473"/>
<dbReference type="STRING" id="572265.HDEF_0625"/>
<dbReference type="GeneID" id="66260494"/>
<dbReference type="KEGG" id="hde:HDEF_0625"/>
<dbReference type="eggNOG" id="COG1758">
    <property type="taxonomic scope" value="Bacteria"/>
</dbReference>
<dbReference type="HOGENOM" id="CLU_125406_5_2_6"/>
<dbReference type="Proteomes" id="UP000002334">
    <property type="component" value="Chromosome"/>
</dbReference>
<dbReference type="GO" id="GO:0000428">
    <property type="term" value="C:DNA-directed RNA polymerase complex"/>
    <property type="evidence" value="ECO:0007669"/>
    <property type="project" value="UniProtKB-KW"/>
</dbReference>
<dbReference type="GO" id="GO:0003677">
    <property type="term" value="F:DNA binding"/>
    <property type="evidence" value="ECO:0007669"/>
    <property type="project" value="UniProtKB-UniRule"/>
</dbReference>
<dbReference type="GO" id="GO:0003899">
    <property type="term" value="F:DNA-directed RNA polymerase activity"/>
    <property type="evidence" value="ECO:0007669"/>
    <property type="project" value="UniProtKB-UniRule"/>
</dbReference>
<dbReference type="GO" id="GO:0006351">
    <property type="term" value="P:DNA-templated transcription"/>
    <property type="evidence" value="ECO:0007669"/>
    <property type="project" value="UniProtKB-UniRule"/>
</dbReference>
<dbReference type="Gene3D" id="3.90.940.10">
    <property type="match status" value="1"/>
</dbReference>
<dbReference type="HAMAP" id="MF_00366">
    <property type="entry name" value="RNApol_bact_RpoZ"/>
    <property type="match status" value="1"/>
</dbReference>
<dbReference type="InterPro" id="IPR003716">
    <property type="entry name" value="DNA-dir_RNA_pol_omega"/>
</dbReference>
<dbReference type="InterPro" id="IPR006110">
    <property type="entry name" value="Pol_omega/Rpo6/RPB6"/>
</dbReference>
<dbReference type="InterPro" id="IPR036161">
    <property type="entry name" value="RPB6/omega-like_sf"/>
</dbReference>
<dbReference type="NCBIfam" id="TIGR00690">
    <property type="entry name" value="rpoZ"/>
    <property type="match status" value="1"/>
</dbReference>
<dbReference type="PANTHER" id="PTHR34476">
    <property type="entry name" value="DNA-DIRECTED RNA POLYMERASE SUBUNIT OMEGA"/>
    <property type="match status" value="1"/>
</dbReference>
<dbReference type="PANTHER" id="PTHR34476:SF1">
    <property type="entry name" value="DNA-DIRECTED RNA POLYMERASE SUBUNIT OMEGA"/>
    <property type="match status" value="1"/>
</dbReference>
<dbReference type="Pfam" id="PF01192">
    <property type="entry name" value="RNA_pol_Rpb6"/>
    <property type="match status" value="1"/>
</dbReference>
<dbReference type="SMART" id="SM01409">
    <property type="entry name" value="RNA_pol_Rpb6"/>
    <property type="match status" value="1"/>
</dbReference>
<dbReference type="SUPFAM" id="SSF63562">
    <property type="entry name" value="RPB6/omega subunit-like"/>
    <property type="match status" value="1"/>
</dbReference>
<comment type="function">
    <text evidence="1">Promotes RNA polymerase assembly. Latches the N- and C-terminal regions of the beta' subunit thereby facilitating its interaction with the beta and alpha subunits.</text>
</comment>
<comment type="catalytic activity">
    <reaction evidence="1">
        <text>RNA(n) + a ribonucleoside 5'-triphosphate = RNA(n+1) + diphosphate</text>
        <dbReference type="Rhea" id="RHEA:21248"/>
        <dbReference type="Rhea" id="RHEA-COMP:14527"/>
        <dbReference type="Rhea" id="RHEA-COMP:17342"/>
        <dbReference type="ChEBI" id="CHEBI:33019"/>
        <dbReference type="ChEBI" id="CHEBI:61557"/>
        <dbReference type="ChEBI" id="CHEBI:140395"/>
        <dbReference type="EC" id="2.7.7.6"/>
    </reaction>
</comment>
<comment type="subunit">
    <text evidence="1">The RNAP catalytic core consists of 2 alpha, 1 beta, 1 beta' and 1 omega subunit. When a sigma factor is associated with the core the holoenzyme is formed, which can initiate transcription.</text>
</comment>
<comment type="similarity">
    <text evidence="1">Belongs to the RNA polymerase subunit omega family.</text>
</comment>
<reference key="1">
    <citation type="journal article" date="2009" name="Proc. Natl. Acad. Sci. U.S.A.">
        <title>Hamiltonella defensa, genome evolution of protective bacterial endosymbiont from pathogenic ancestors.</title>
        <authorList>
            <person name="Degnan P.H."/>
            <person name="Yu Y."/>
            <person name="Sisneros N."/>
            <person name="Wing R.A."/>
            <person name="Moran N.A."/>
        </authorList>
    </citation>
    <scope>NUCLEOTIDE SEQUENCE [LARGE SCALE GENOMIC DNA]</scope>
    <source>
        <strain>5AT</strain>
    </source>
</reference>
<evidence type="ECO:0000255" key="1">
    <source>
        <dbReference type="HAMAP-Rule" id="MF_00366"/>
    </source>
</evidence>
<organism>
    <name type="scientific">Hamiltonella defensa subsp. Acyrthosiphon pisum (strain 5AT)</name>
    <dbReference type="NCBI Taxonomy" id="572265"/>
    <lineage>
        <taxon>Bacteria</taxon>
        <taxon>Pseudomonadati</taxon>
        <taxon>Pseudomonadota</taxon>
        <taxon>Gammaproteobacteria</taxon>
        <taxon>Enterobacterales</taxon>
        <taxon>Enterobacteriaceae</taxon>
        <taxon>aphid secondary symbionts</taxon>
        <taxon>Candidatus Hamiltonella</taxon>
    </lineage>
</organism>
<protein>
    <recommendedName>
        <fullName evidence="1">DNA-directed RNA polymerase subunit omega</fullName>
        <shortName evidence="1">RNAP omega subunit</shortName>
        <ecNumber evidence="1">2.7.7.6</ecNumber>
    </recommendedName>
    <alternativeName>
        <fullName evidence="1">RNA polymerase omega subunit</fullName>
    </alternativeName>
    <alternativeName>
        <fullName evidence="1">Transcriptase subunit omega</fullName>
    </alternativeName>
</protein>
<name>RPOZ_HAMD5</name>
<proteinExistence type="inferred from homology"/>
<accession>C4K473</accession>
<gene>
    <name evidence="1" type="primary">rpoZ</name>
    <name type="ordered locus">HDEF_0625</name>
</gene>